<gene>
    <name evidence="2" type="primary">cysN</name>
    <name type="ordered locus">SF2774</name>
    <name type="ordered locus">S2967</name>
</gene>
<organism>
    <name type="scientific">Shigella flexneri</name>
    <dbReference type="NCBI Taxonomy" id="623"/>
    <lineage>
        <taxon>Bacteria</taxon>
        <taxon>Pseudomonadati</taxon>
        <taxon>Pseudomonadota</taxon>
        <taxon>Gammaproteobacteria</taxon>
        <taxon>Enterobacterales</taxon>
        <taxon>Enterobacteriaceae</taxon>
        <taxon>Shigella</taxon>
    </lineage>
</organism>
<sequence length="475" mass="52651">MNTVLAQQIANEGGVEAWMIAQQHKSLLRFLTCGSVDDGKSTLIGRLLHDTRQIYEDQLSSLHNDSKRHGTQGEKLDLALLVDGLQAEREQGITIDVAYRYFSTEKRKFIIADTPGHEQYTRNMATGASTCELAILLIDARKGVLDQTRRHSFISTLLGIKHLVVAINKMDLVDYSEETFTRIREDYLTFAGQLPGNLDIRFVPLSALEGDNVASQSESMPWYSGLTLLEVLETVEIQRVVDAQPMRFPVQYVNRPNLDFRGYAGMLASGRVEVGQRVKVLPSGVESNVARIVTFDGDREEVFAGEAITLVLTDEIDISRGDLLLAADEALPAVQSASVDVVWMAEQPLSPGQSYDIKIAGKKTRARVDGIRYQVDINNLTQREVENLPLNGIGLVDLTFDEPLVLDRYQQNPVTGGLIFIDRLSNVTVGAGMVHEPVSQATAASSEFSAFELELNALVRRHFPHWGARDLLGDK</sequence>
<proteinExistence type="inferred from homology"/>
<evidence type="ECO:0000250" key="1"/>
<evidence type="ECO:0000255" key="2">
    <source>
        <dbReference type="HAMAP-Rule" id="MF_00062"/>
    </source>
</evidence>
<dbReference type="EC" id="2.7.7.4" evidence="2"/>
<dbReference type="EMBL" id="AE005674">
    <property type="protein sequence ID" value="AAN44263.1"/>
    <property type="molecule type" value="Genomic_DNA"/>
</dbReference>
<dbReference type="EMBL" id="AE014073">
    <property type="protein sequence ID" value="AAP18089.1"/>
    <property type="molecule type" value="Genomic_DNA"/>
</dbReference>
<dbReference type="RefSeq" id="NP_708556.1">
    <property type="nucleotide sequence ID" value="NC_004337.2"/>
</dbReference>
<dbReference type="RefSeq" id="WP_001098971.1">
    <property type="nucleotide sequence ID" value="NZ_WPGW01000039.1"/>
</dbReference>
<dbReference type="SMR" id="Q83JX8"/>
<dbReference type="STRING" id="198214.SF2774"/>
<dbReference type="PaxDb" id="198214-SF2774"/>
<dbReference type="GeneID" id="1027446"/>
<dbReference type="KEGG" id="sfl:SF2774"/>
<dbReference type="KEGG" id="sfx:S2967"/>
<dbReference type="PATRIC" id="fig|198214.7.peg.3301"/>
<dbReference type="HOGENOM" id="CLU_007265_5_2_6"/>
<dbReference type="UniPathway" id="UPA00140">
    <property type="reaction ID" value="UER00204"/>
</dbReference>
<dbReference type="Proteomes" id="UP000001006">
    <property type="component" value="Chromosome"/>
</dbReference>
<dbReference type="Proteomes" id="UP000002673">
    <property type="component" value="Chromosome"/>
</dbReference>
<dbReference type="GO" id="GO:0005524">
    <property type="term" value="F:ATP binding"/>
    <property type="evidence" value="ECO:0007669"/>
    <property type="project" value="UniProtKB-KW"/>
</dbReference>
<dbReference type="GO" id="GO:0005525">
    <property type="term" value="F:GTP binding"/>
    <property type="evidence" value="ECO:0007669"/>
    <property type="project" value="UniProtKB-UniRule"/>
</dbReference>
<dbReference type="GO" id="GO:0003924">
    <property type="term" value="F:GTPase activity"/>
    <property type="evidence" value="ECO:0007669"/>
    <property type="project" value="InterPro"/>
</dbReference>
<dbReference type="GO" id="GO:0004781">
    <property type="term" value="F:sulfate adenylyltransferase (ATP) activity"/>
    <property type="evidence" value="ECO:0007669"/>
    <property type="project" value="UniProtKB-UniRule"/>
</dbReference>
<dbReference type="GO" id="GO:0070814">
    <property type="term" value="P:hydrogen sulfide biosynthetic process"/>
    <property type="evidence" value="ECO:0007669"/>
    <property type="project" value="UniProtKB-UniRule"/>
</dbReference>
<dbReference type="GO" id="GO:0000103">
    <property type="term" value="P:sulfate assimilation"/>
    <property type="evidence" value="ECO:0007669"/>
    <property type="project" value="UniProtKB-UniRule"/>
</dbReference>
<dbReference type="CDD" id="cd04166">
    <property type="entry name" value="CysN_ATPS"/>
    <property type="match status" value="1"/>
</dbReference>
<dbReference type="CDD" id="cd03695">
    <property type="entry name" value="CysN_NodQ_II"/>
    <property type="match status" value="1"/>
</dbReference>
<dbReference type="CDD" id="cd04095">
    <property type="entry name" value="CysN_NoDQ_III"/>
    <property type="match status" value="1"/>
</dbReference>
<dbReference type="FunFam" id="2.40.30.10:FF:000027">
    <property type="entry name" value="Sulfate adenylyltransferase subunit 1"/>
    <property type="match status" value="1"/>
</dbReference>
<dbReference type="FunFam" id="2.40.30.10:FF:000031">
    <property type="entry name" value="Sulfate adenylyltransferase subunit 1"/>
    <property type="match status" value="1"/>
</dbReference>
<dbReference type="FunFam" id="3.40.50.300:FF:000119">
    <property type="entry name" value="Sulfate adenylyltransferase subunit 1"/>
    <property type="match status" value="1"/>
</dbReference>
<dbReference type="Gene3D" id="3.40.50.300">
    <property type="entry name" value="P-loop containing nucleotide triphosphate hydrolases"/>
    <property type="match status" value="1"/>
</dbReference>
<dbReference type="Gene3D" id="2.40.30.10">
    <property type="entry name" value="Translation factors"/>
    <property type="match status" value="2"/>
</dbReference>
<dbReference type="HAMAP" id="MF_00062">
    <property type="entry name" value="Sulf_adenylyltr_sub1"/>
    <property type="match status" value="1"/>
</dbReference>
<dbReference type="InterPro" id="IPR041757">
    <property type="entry name" value="CysN_GTP-bd"/>
</dbReference>
<dbReference type="InterPro" id="IPR044138">
    <property type="entry name" value="CysN_II"/>
</dbReference>
<dbReference type="InterPro" id="IPR044139">
    <property type="entry name" value="CysN_NoDQ_III"/>
</dbReference>
<dbReference type="InterPro" id="IPR031157">
    <property type="entry name" value="G_TR_CS"/>
</dbReference>
<dbReference type="InterPro" id="IPR054696">
    <property type="entry name" value="GTP-eEF1A_C"/>
</dbReference>
<dbReference type="InterPro" id="IPR027417">
    <property type="entry name" value="P-loop_NTPase"/>
</dbReference>
<dbReference type="InterPro" id="IPR005225">
    <property type="entry name" value="Small_GTP-bd"/>
</dbReference>
<dbReference type="InterPro" id="IPR011779">
    <property type="entry name" value="SO4_adenylTrfase_lsu"/>
</dbReference>
<dbReference type="InterPro" id="IPR000795">
    <property type="entry name" value="T_Tr_GTP-bd_dom"/>
</dbReference>
<dbReference type="InterPro" id="IPR050100">
    <property type="entry name" value="TRAFAC_GTPase_members"/>
</dbReference>
<dbReference type="InterPro" id="IPR009000">
    <property type="entry name" value="Transl_B-barrel_sf"/>
</dbReference>
<dbReference type="InterPro" id="IPR009001">
    <property type="entry name" value="Transl_elong_EF1A/Init_IF2_C"/>
</dbReference>
<dbReference type="NCBIfam" id="TIGR02034">
    <property type="entry name" value="CysN"/>
    <property type="match status" value="1"/>
</dbReference>
<dbReference type="NCBIfam" id="NF003478">
    <property type="entry name" value="PRK05124.1"/>
    <property type="match status" value="1"/>
</dbReference>
<dbReference type="NCBIfam" id="TIGR00231">
    <property type="entry name" value="small_GTP"/>
    <property type="match status" value="1"/>
</dbReference>
<dbReference type="PANTHER" id="PTHR23115">
    <property type="entry name" value="TRANSLATION FACTOR"/>
    <property type="match status" value="1"/>
</dbReference>
<dbReference type="Pfam" id="PF22594">
    <property type="entry name" value="GTP-eEF1A_C"/>
    <property type="match status" value="1"/>
</dbReference>
<dbReference type="Pfam" id="PF00009">
    <property type="entry name" value="GTP_EFTU"/>
    <property type="match status" value="1"/>
</dbReference>
<dbReference type="PRINTS" id="PR00315">
    <property type="entry name" value="ELONGATNFCT"/>
</dbReference>
<dbReference type="SUPFAM" id="SSF50465">
    <property type="entry name" value="EF-Tu/eEF-1alpha/eIF2-gamma C-terminal domain"/>
    <property type="match status" value="1"/>
</dbReference>
<dbReference type="SUPFAM" id="SSF52540">
    <property type="entry name" value="P-loop containing nucleoside triphosphate hydrolases"/>
    <property type="match status" value="1"/>
</dbReference>
<dbReference type="SUPFAM" id="SSF50447">
    <property type="entry name" value="Translation proteins"/>
    <property type="match status" value="1"/>
</dbReference>
<dbReference type="PROSITE" id="PS00301">
    <property type="entry name" value="G_TR_1"/>
    <property type="match status" value="1"/>
</dbReference>
<dbReference type="PROSITE" id="PS51722">
    <property type="entry name" value="G_TR_2"/>
    <property type="match status" value="1"/>
</dbReference>
<comment type="function">
    <text evidence="2">With CysD forms the ATP sulfurylase (ATPS) that catalyzes the adenylation of sulfate producing adenosine 5'-phosphosulfate (APS) and diphosphate, the first enzymatic step in sulfur assimilation pathway. APS synthesis involves the formation of a high-energy phosphoric-sulfuric acid anhydride bond driven by GTP hydrolysis by CysN coupled to ATP hydrolysis by CysD.</text>
</comment>
<comment type="catalytic activity">
    <reaction evidence="2">
        <text>sulfate + ATP + H(+) = adenosine 5'-phosphosulfate + diphosphate</text>
        <dbReference type="Rhea" id="RHEA:18133"/>
        <dbReference type="ChEBI" id="CHEBI:15378"/>
        <dbReference type="ChEBI" id="CHEBI:16189"/>
        <dbReference type="ChEBI" id="CHEBI:30616"/>
        <dbReference type="ChEBI" id="CHEBI:33019"/>
        <dbReference type="ChEBI" id="CHEBI:58243"/>
        <dbReference type="EC" id="2.7.7.4"/>
    </reaction>
</comment>
<comment type="pathway">
    <text evidence="2">Sulfur metabolism; hydrogen sulfide biosynthesis; sulfite from sulfate: step 1/3.</text>
</comment>
<comment type="subunit">
    <text evidence="2">Heterodimer composed of CysD, the smaller subunit, and CysN.</text>
</comment>
<comment type="similarity">
    <text evidence="2">Belongs to the TRAFAC class translation factor GTPase superfamily. Classic translation factor GTPase family. CysN/NodQ subfamily.</text>
</comment>
<keyword id="KW-0067">ATP-binding</keyword>
<keyword id="KW-0342">GTP-binding</keyword>
<keyword id="KW-0547">Nucleotide-binding</keyword>
<keyword id="KW-0548">Nucleotidyltransferase</keyword>
<keyword id="KW-1185">Reference proteome</keyword>
<keyword id="KW-0808">Transferase</keyword>
<name>CYSN_SHIFL</name>
<accession>Q83JX8</accession>
<feature type="chain" id="PRO_0000091531" description="Sulfate adenylyltransferase subunit 1">
    <location>
        <begin position="1"/>
        <end position="475"/>
    </location>
</feature>
<feature type="domain" description="tr-type G">
    <location>
        <begin position="25"/>
        <end position="239"/>
    </location>
</feature>
<feature type="region of interest" description="G1" evidence="1">
    <location>
        <begin position="34"/>
        <end position="41"/>
    </location>
</feature>
<feature type="region of interest" description="G2" evidence="1">
    <location>
        <begin position="92"/>
        <end position="96"/>
    </location>
</feature>
<feature type="region of interest" description="G3" evidence="1">
    <location>
        <begin position="113"/>
        <end position="116"/>
    </location>
</feature>
<feature type="region of interest" description="G4" evidence="1">
    <location>
        <begin position="168"/>
        <end position="171"/>
    </location>
</feature>
<feature type="region of interest" description="G5" evidence="1">
    <location>
        <begin position="206"/>
        <end position="208"/>
    </location>
</feature>
<feature type="binding site" evidence="2">
    <location>
        <begin position="34"/>
        <end position="41"/>
    </location>
    <ligand>
        <name>GTP</name>
        <dbReference type="ChEBI" id="CHEBI:37565"/>
    </ligand>
</feature>
<feature type="binding site" evidence="2">
    <location>
        <begin position="113"/>
        <end position="117"/>
    </location>
    <ligand>
        <name>GTP</name>
        <dbReference type="ChEBI" id="CHEBI:37565"/>
    </ligand>
</feature>
<feature type="binding site" evidence="2">
    <location>
        <begin position="168"/>
        <end position="171"/>
    </location>
    <ligand>
        <name>GTP</name>
        <dbReference type="ChEBI" id="CHEBI:37565"/>
    </ligand>
</feature>
<reference key="1">
    <citation type="journal article" date="2002" name="Nucleic Acids Res.">
        <title>Genome sequence of Shigella flexneri 2a: insights into pathogenicity through comparison with genomes of Escherichia coli K12 and O157.</title>
        <authorList>
            <person name="Jin Q."/>
            <person name="Yuan Z."/>
            <person name="Xu J."/>
            <person name="Wang Y."/>
            <person name="Shen Y."/>
            <person name="Lu W."/>
            <person name="Wang J."/>
            <person name="Liu H."/>
            <person name="Yang J."/>
            <person name="Yang F."/>
            <person name="Zhang X."/>
            <person name="Zhang J."/>
            <person name="Yang G."/>
            <person name="Wu H."/>
            <person name="Qu D."/>
            <person name="Dong J."/>
            <person name="Sun L."/>
            <person name="Xue Y."/>
            <person name="Zhao A."/>
            <person name="Gao Y."/>
            <person name="Zhu J."/>
            <person name="Kan B."/>
            <person name="Ding K."/>
            <person name="Chen S."/>
            <person name="Cheng H."/>
            <person name="Yao Z."/>
            <person name="He B."/>
            <person name="Chen R."/>
            <person name="Ma D."/>
            <person name="Qiang B."/>
            <person name="Wen Y."/>
            <person name="Hou Y."/>
            <person name="Yu J."/>
        </authorList>
    </citation>
    <scope>NUCLEOTIDE SEQUENCE [LARGE SCALE GENOMIC DNA]</scope>
    <source>
        <strain>301 / Serotype 2a</strain>
    </source>
</reference>
<reference key="2">
    <citation type="journal article" date="2003" name="Infect. Immun.">
        <title>Complete genome sequence and comparative genomics of Shigella flexneri serotype 2a strain 2457T.</title>
        <authorList>
            <person name="Wei J."/>
            <person name="Goldberg M.B."/>
            <person name="Burland V."/>
            <person name="Venkatesan M.M."/>
            <person name="Deng W."/>
            <person name="Fournier G."/>
            <person name="Mayhew G.F."/>
            <person name="Plunkett G. III"/>
            <person name="Rose D.J."/>
            <person name="Darling A."/>
            <person name="Mau B."/>
            <person name="Perna N.T."/>
            <person name="Payne S.M."/>
            <person name="Runyen-Janecky L.J."/>
            <person name="Zhou S."/>
            <person name="Schwartz D.C."/>
            <person name="Blattner F.R."/>
        </authorList>
    </citation>
    <scope>NUCLEOTIDE SEQUENCE [LARGE SCALE GENOMIC DNA]</scope>
    <source>
        <strain>ATCC 700930 / 2457T / Serotype 2a</strain>
    </source>
</reference>
<protein>
    <recommendedName>
        <fullName evidence="2">Sulfate adenylyltransferase subunit 1</fullName>
        <ecNumber evidence="2">2.7.7.4</ecNumber>
    </recommendedName>
    <alternativeName>
        <fullName evidence="2">ATP-sulfurylase large subunit</fullName>
    </alternativeName>
    <alternativeName>
        <fullName evidence="2">Sulfate adenylate transferase</fullName>
        <shortName evidence="2">SAT</shortName>
    </alternativeName>
</protein>